<gene>
    <name type="primary">NCB2</name>
    <name type="synonym">YDR1</name>
    <name type="ordered locus">YDR397C</name>
</gene>
<dbReference type="EMBL" id="U91948">
    <property type="protein sequence ID" value="AAB51375.1"/>
    <property type="molecule type" value="Genomic_DNA"/>
</dbReference>
<dbReference type="EMBL" id="Y09266">
    <property type="protein sequence ID" value="CAA70461.1"/>
    <property type="molecule type" value="mRNA"/>
</dbReference>
<dbReference type="EMBL" id="U32274">
    <property type="protein sequence ID" value="AAB64838.1"/>
    <property type="status" value="ALT_SEQ"/>
    <property type="molecule type" value="Genomic_DNA"/>
</dbReference>
<dbReference type="EMBL" id="BK006938">
    <property type="protein sequence ID" value="DAA12240.1"/>
    <property type="molecule type" value="Genomic_DNA"/>
</dbReference>
<dbReference type="PIR" id="S69694">
    <property type="entry name" value="S69694"/>
</dbReference>
<dbReference type="RefSeq" id="NP_010685.1">
    <property type="nucleotide sequence ID" value="NM_001180705.1"/>
</dbReference>
<dbReference type="SMR" id="Q92317"/>
<dbReference type="BioGRID" id="32458">
    <property type="interactions" value="483"/>
</dbReference>
<dbReference type="ComplexPortal" id="CPX-1662">
    <property type="entry name" value="Negative cofactor 2 transcriptional regulator complex"/>
</dbReference>
<dbReference type="DIP" id="DIP-2067N"/>
<dbReference type="FunCoup" id="Q92317">
    <property type="interactions" value="1008"/>
</dbReference>
<dbReference type="IntAct" id="Q92317">
    <property type="interactions" value="7"/>
</dbReference>
<dbReference type="MINT" id="Q92317"/>
<dbReference type="STRING" id="4932.YDR397C"/>
<dbReference type="iPTMnet" id="Q92317"/>
<dbReference type="PaxDb" id="4932-YDR397C"/>
<dbReference type="PeptideAtlas" id="Q92317"/>
<dbReference type="TopDownProteomics" id="Q92317"/>
<dbReference type="EnsemblFungi" id="YDR397C_mRNA">
    <property type="protein sequence ID" value="YDR397C"/>
    <property type="gene ID" value="YDR397C"/>
</dbReference>
<dbReference type="GeneID" id="852006"/>
<dbReference type="KEGG" id="sce:YDR397C"/>
<dbReference type="AGR" id="SGD:S000002805"/>
<dbReference type="SGD" id="S000002805">
    <property type="gene designation" value="NCB2"/>
</dbReference>
<dbReference type="VEuPathDB" id="FungiDB:YDR397C"/>
<dbReference type="eggNOG" id="KOG0871">
    <property type="taxonomic scope" value="Eukaryota"/>
</dbReference>
<dbReference type="GeneTree" id="ENSGT00550000075010"/>
<dbReference type="HOGENOM" id="CLU_066247_11_3_1"/>
<dbReference type="InParanoid" id="Q92317"/>
<dbReference type="OMA" id="RDAKFKK"/>
<dbReference type="OrthoDB" id="601405at2759"/>
<dbReference type="BioCyc" id="YEAST:G3O-29944-MONOMER"/>
<dbReference type="BioGRID-ORCS" id="852006">
    <property type="hits" value="3 hits in 10 CRISPR screens"/>
</dbReference>
<dbReference type="PRO" id="PR:Q92317"/>
<dbReference type="Proteomes" id="UP000002311">
    <property type="component" value="Chromosome IV"/>
</dbReference>
<dbReference type="RNAct" id="Q92317">
    <property type="molecule type" value="protein"/>
</dbReference>
<dbReference type="GO" id="GO:0017054">
    <property type="term" value="C:negative cofactor 2 complex"/>
    <property type="evidence" value="ECO:0000314"/>
    <property type="project" value="SGD"/>
</dbReference>
<dbReference type="GO" id="GO:0005634">
    <property type="term" value="C:nucleus"/>
    <property type="evidence" value="ECO:0000314"/>
    <property type="project" value="SGD"/>
</dbReference>
<dbReference type="GO" id="GO:0003682">
    <property type="term" value="F:chromatin binding"/>
    <property type="evidence" value="ECO:0000314"/>
    <property type="project" value="SGD"/>
</dbReference>
<dbReference type="GO" id="GO:0001046">
    <property type="term" value="F:core promoter sequence-specific DNA binding"/>
    <property type="evidence" value="ECO:0000314"/>
    <property type="project" value="SGD"/>
</dbReference>
<dbReference type="GO" id="GO:0046982">
    <property type="term" value="F:protein heterodimerization activity"/>
    <property type="evidence" value="ECO:0007669"/>
    <property type="project" value="InterPro"/>
</dbReference>
<dbReference type="GO" id="GO:0016251">
    <property type="term" value="F:RNA polymerase II general transcription initiation factor activity"/>
    <property type="evidence" value="ECO:0000318"/>
    <property type="project" value="GO_Central"/>
</dbReference>
<dbReference type="GO" id="GO:0003714">
    <property type="term" value="F:transcription corepressor activity"/>
    <property type="evidence" value="ECO:0000314"/>
    <property type="project" value="SGD"/>
</dbReference>
<dbReference type="GO" id="GO:0034605">
    <property type="term" value="P:cellular response to heat"/>
    <property type="evidence" value="ECO:0000315"/>
    <property type="project" value="SGD"/>
</dbReference>
<dbReference type="GO" id="GO:0017055">
    <property type="term" value="P:negative regulation of RNA polymerase II transcription preinitiation complex assembly"/>
    <property type="evidence" value="ECO:0000314"/>
    <property type="project" value="ComplexPortal"/>
</dbReference>
<dbReference type="GO" id="GO:0000122">
    <property type="term" value="P:negative regulation of transcription by RNA polymerase II"/>
    <property type="evidence" value="ECO:0000314"/>
    <property type="project" value="SGD"/>
</dbReference>
<dbReference type="GO" id="GO:0016480">
    <property type="term" value="P:negative regulation of transcription by RNA polymerase III"/>
    <property type="evidence" value="ECO:0000315"/>
    <property type="project" value="SGD"/>
</dbReference>
<dbReference type="GO" id="GO:0045944">
    <property type="term" value="P:positive regulation of transcription by RNA polymerase II"/>
    <property type="evidence" value="ECO:0000314"/>
    <property type="project" value="SGD"/>
</dbReference>
<dbReference type="GO" id="GO:0045898">
    <property type="term" value="P:regulation of RNA polymerase II transcription preinitiation complex assembly"/>
    <property type="evidence" value="ECO:0000315"/>
    <property type="project" value="SGD"/>
</dbReference>
<dbReference type="GO" id="GO:0051123">
    <property type="term" value="P:RNA polymerase II preinitiation complex assembly"/>
    <property type="evidence" value="ECO:0000315"/>
    <property type="project" value="SGD"/>
</dbReference>
<dbReference type="CDD" id="cd22905">
    <property type="entry name" value="HFD_Dr1"/>
    <property type="match status" value="1"/>
</dbReference>
<dbReference type="FunFam" id="1.10.20.10:FF:000019">
    <property type="entry name" value="Negative cofactor 2 beta"/>
    <property type="match status" value="1"/>
</dbReference>
<dbReference type="Gene3D" id="1.10.20.10">
    <property type="entry name" value="Histone, subunit A"/>
    <property type="match status" value="1"/>
</dbReference>
<dbReference type="InterPro" id="IPR003958">
    <property type="entry name" value="CBFA_NFYB_domain"/>
</dbReference>
<dbReference type="InterPro" id="IPR009072">
    <property type="entry name" value="Histone-fold"/>
</dbReference>
<dbReference type="InterPro" id="IPR042225">
    <property type="entry name" value="Ncb2"/>
</dbReference>
<dbReference type="PANTHER" id="PTHR46138">
    <property type="entry name" value="PROTEIN DR1"/>
    <property type="match status" value="1"/>
</dbReference>
<dbReference type="PANTHER" id="PTHR46138:SF1">
    <property type="entry name" value="PROTEIN DR1"/>
    <property type="match status" value="1"/>
</dbReference>
<dbReference type="Pfam" id="PF00808">
    <property type="entry name" value="CBFD_NFYB_HMF"/>
    <property type="match status" value="1"/>
</dbReference>
<dbReference type="SUPFAM" id="SSF47113">
    <property type="entry name" value="Histone-fold"/>
    <property type="match status" value="1"/>
</dbReference>
<evidence type="ECO:0000256" key="1">
    <source>
        <dbReference type="SAM" id="MobiDB-lite"/>
    </source>
</evidence>
<evidence type="ECO:0000269" key="2">
    <source>
    </source>
</evidence>
<evidence type="ECO:0000269" key="3">
    <source>
    </source>
</evidence>
<evidence type="ECO:0000269" key="4">
    <source>
    </source>
</evidence>
<evidence type="ECO:0000269" key="5">
    <source>
    </source>
</evidence>
<evidence type="ECO:0000269" key="6">
    <source>
    </source>
</evidence>
<evidence type="ECO:0000269" key="7">
    <source>
    </source>
</evidence>
<evidence type="ECO:0000305" key="8"/>
<evidence type="ECO:0007744" key="9">
    <source>
    </source>
</evidence>
<evidence type="ECO:0007744" key="10">
    <source>
    </source>
</evidence>
<evidence type="ECO:0007744" key="11">
    <source>
    </source>
</evidence>
<accession>Q92317</accession>
<accession>D6VT30</accession>
<accession>O00064</accession>
<accession>P87340</accession>
<accession>Q04176</accession>
<name>NCB2_YEAST</name>
<reference key="1">
    <citation type="journal article" date="1997" name="Proc. Natl. Acad. Sci. U.S.A.">
        <title>The Dr1/DRAP1 heterodimer is a global repressor of transcription in vivo.</title>
        <authorList>
            <person name="Kim S."/>
            <person name="Na J.G."/>
            <person name="Hampsey M."/>
            <person name="Reinberg D."/>
        </authorList>
    </citation>
    <scope>NUCLEOTIDE SEQUENCE [GENOMIC DNA]</scope>
    <scope>IDENTIFICATION IN THE NC2 COMPLEX</scope>
    <scope>FUNCTION OF THE NC2 COMPLEX</scope>
</reference>
<reference key="2">
    <citation type="journal article" date="1996" name="Nucleic Acids Res.">
        <title>Characterization of the basal inhibitor of class II transcription NC2 from Saccharomyces cerevisiae.</title>
        <authorList>
            <person name="Goppelt A.R."/>
            <person name="Meisterernst M."/>
        </authorList>
    </citation>
    <scope>NUCLEOTIDE SEQUENCE [MRNA]</scope>
    <scope>SUBUNIT</scope>
    <scope>FUNCTION OF THE NC2 COMPLEX</scope>
</reference>
<reference key="3">
    <citation type="journal article" date="1997" name="Nature">
        <title>The nucleotide sequence of Saccharomyces cerevisiae chromosome IV.</title>
        <authorList>
            <person name="Jacq C."/>
            <person name="Alt-Moerbe J."/>
            <person name="Andre B."/>
            <person name="Arnold W."/>
            <person name="Bahr A."/>
            <person name="Ballesta J.P.G."/>
            <person name="Bargues M."/>
            <person name="Baron L."/>
            <person name="Becker A."/>
            <person name="Biteau N."/>
            <person name="Bloecker H."/>
            <person name="Blugeon C."/>
            <person name="Boskovic J."/>
            <person name="Brandt P."/>
            <person name="Brueckner M."/>
            <person name="Buitrago M.J."/>
            <person name="Coster F."/>
            <person name="Delaveau T."/>
            <person name="del Rey F."/>
            <person name="Dujon B."/>
            <person name="Eide L.G."/>
            <person name="Garcia-Cantalejo J.M."/>
            <person name="Goffeau A."/>
            <person name="Gomez-Peris A."/>
            <person name="Granotier C."/>
            <person name="Hanemann V."/>
            <person name="Hankeln T."/>
            <person name="Hoheisel J.D."/>
            <person name="Jaeger W."/>
            <person name="Jimenez A."/>
            <person name="Jonniaux J.-L."/>
            <person name="Kraemer C."/>
            <person name="Kuester H."/>
            <person name="Laamanen P."/>
            <person name="Legros Y."/>
            <person name="Louis E.J."/>
            <person name="Moeller-Rieker S."/>
            <person name="Monnet A."/>
            <person name="Moro M."/>
            <person name="Mueller-Auer S."/>
            <person name="Nussbaumer B."/>
            <person name="Paricio N."/>
            <person name="Paulin L."/>
            <person name="Perea J."/>
            <person name="Perez-Alonso M."/>
            <person name="Perez-Ortin J.E."/>
            <person name="Pohl T.M."/>
            <person name="Prydz H."/>
            <person name="Purnelle B."/>
            <person name="Rasmussen S.W."/>
            <person name="Remacha M.A."/>
            <person name="Revuelta J.L."/>
            <person name="Rieger M."/>
            <person name="Salom D."/>
            <person name="Saluz H.P."/>
            <person name="Saiz J.E."/>
            <person name="Saren A.-M."/>
            <person name="Schaefer M."/>
            <person name="Scharfe M."/>
            <person name="Schmidt E.R."/>
            <person name="Schneider C."/>
            <person name="Scholler P."/>
            <person name="Schwarz S."/>
            <person name="Soler-Mira A."/>
            <person name="Urrestarazu L.A."/>
            <person name="Verhasselt P."/>
            <person name="Vissers S."/>
            <person name="Voet M."/>
            <person name="Volckaert G."/>
            <person name="Wagner G."/>
            <person name="Wambutt R."/>
            <person name="Wedler E."/>
            <person name="Wedler H."/>
            <person name="Woelfl S."/>
            <person name="Harris D.E."/>
            <person name="Bowman S."/>
            <person name="Brown D."/>
            <person name="Churcher C.M."/>
            <person name="Connor R."/>
            <person name="Dedman K."/>
            <person name="Gentles S."/>
            <person name="Hamlin N."/>
            <person name="Hunt S."/>
            <person name="Jones L."/>
            <person name="McDonald S."/>
            <person name="Murphy L.D."/>
            <person name="Niblett D."/>
            <person name="Odell C."/>
            <person name="Oliver K."/>
            <person name="Rajandream M.A."/>
            <person name="Richards C."/>
            <person name="Shore L."/>
            <person name="Walsh S.V."/>
            <person name="Barrell B.G."/>
            <person name="Dietrich F.S."/>
            <person name="Mulligan J.T."/>
            <person name="Allen E."/>
            <person name="Araujo R."/>
            <person name="Aviles E."/>
            <person name="Berno A."/>
            <person name="Carpenter J."/>
            <person name="Chen E."/>
            <person name="Cherry J.M."/>
            <person name="Chung E."/>
            <person name="Duncan M."/>
            <person name="Hunicke-Smith S."/>
            <person name="Hyman R.W."/>
            <person name="Komp C."/>
            <person name="Lashkari D."/>
            <person name="Lew H."/>
            <person name="Lin D."/>
            <person name="Mosedale D."/>
            <person name="Nakahara K."/>
            <person name="Namath A."/>
            <person name="Oefner P."/>
            <person name="Oh C."/>
            <person name="Petel F.X."/>
            <person name="Roberts D."/>
            <person name="Schramm S."/>
            <person name="Schroeder M."/>
            <person name="Shogren T."/>
            <person name="Shroff N."/>
            <person name="Winant A."/>
            <person name="Yelton M.A."/>
            <person name="Botstein D."/>
            <person name="Davis R.W."/>
            <person name="Johnston M."/>
            <person name="Andrews S."/>
            <person name="Brinkman R."/>
            <person name="Cooper J."/>
            <person name="Ding H."/>
            <person name="Du Z."/>
            <person name="Favello A."/>
            <person name="Fulton L."/>
            <person name="Gattung S."/>
            <person name="Greco T."/>
            <person name="Hallsworth K."/>
            <person name="Hawkins J."/>
            <person name="Hillier L.W."/>
            <person name="Jier M."/>
            <person name="Johnson D."/>
            <person name="Johnston L."/>
            <person name="Kirsten J."/>
            <person name="Kucaba T."/>
            <person name="Langston Y."/>
            <person name="Latreille P."/>
            <person name="Le T."/>
            <person name="Mardis E."/>
            <person name="Menezes S."/>
            <person name="Miller N."/>
            <person name="Nhan M."/>
            <person name="Pauley A."/>
            <person name="Peluso D."/>
            <person name="Rifkin L."/>
            <person name="Riles L."/>
            <person name="Taich A."/>
            <person name="Trevaskis E."/>
            <person name="Vignati D."/>
            <person name="Wilcox L."/>
            <person name="Wohldman P."/>
            <person name="Vaudin M."/>
            <person name="Wilson R."/>
            <person name="Waterston R."/>
            <person name="Albermann K."/>
            <person name="Hani J."/>
            <person name="Heumann K."/>
            <person name="Kleine K."/>
            <person name="Mewes H.-W."/>
            <person name="Zollner A."/>
            <person name="Zaccaria P."/>
        </authorList>
    </citation>
    <scope>NUCLEOTIDE SEQUENCE [LARGE SCALE GENOMIC DNA]</scope>
    <source>
        <strain>ATCC 204508 / S288c</strain>
    </source>
</reference>
<reference key="4">
    <citation type="journal article" date="2014" name="G3 (Bethesda)">
        <title>The reference genome sequence of Saccharomyces cerevisiae: Then and now.</title>
        <authorList>
            <person name="Engel S.R."/>
            <person name="Dietrich F.S."/>
            <person name="Fisk D.G."/>
            <person name="Binkley G."/>
            <person name="Balakrishnan R."/>
            <person name="Costanzo M.C."/>
            <person name="Dwight S.S."/>
            <person name="Hitz B.C."/>
            <person name="Karra K."/>
            <person name="Nash R.S."/>
            <person name="Weng S."/>
            <person name="Wong E.D."/>
            <person name="Lloyd P."/>
            <person name="Skrzypek M.S."/>
            <person name="Miyasato S.R."/>
            <person name="Simison M."/>
            <person name="Cherry J.M."/>
        </authorList>
    </citation>
    <scope>GENOME REANNOTATION</scope>
    <source>
        <strain>ATCC 204508 / S288c</strain>
    </source>
</reference>
<reference key="5">
    <citation type="journal article" date="1997" name="Proc. Natl. Acad. Sci. U.S.A.">
        <title>Functional antagonism between RNA polymerase II holoenzyme and global negative regulator NC2 in vivo.</title>
        <authorList>
            <person name="Gadbois E.L."/>
            <person name="Chao D.M."/>
            <person name="Reese J.C."/>
            <person name="Green M.R."/>
            <person name="Young R.A."/>
        </authorList>
    </citation>
    <scope>SUBUNIT</scope>
    <scope>FUNCTION OF THE NC2 COMPLEX</scope>
    <scope>INTERACTION WITH SPT15</scope>
</reference>
<reference key="6">
    <citation type="journal article" date="2002" name="Proc. Natl. Acad. Sci. U.S.A.">
        <title>Direct stimulation of transcription by negative cofactor 2 (NC2) through TATA-binding protein (TBP).</title>
        <authorList>
            <person name="Cang Y."/>
            <person name="Prelich G."/>
        </authorList>
    </citation>
    <scope>FUNCTION OF THE NC2 COMPLEX IN TRANSCRIPTIONAL ACTIVATION</scope>
</reference>
<reference key="7">
    <citation type="journal article" date="2003" name="Nature">
        <title>Global analysis of protein localization in budding yeast.</title>
        <authorList>
            <person name="Huh W.-K."/>
            <person name="Falvo J.V."/>
            <person name="Gerke L.C."/>
            <person name="Carroll A.S."/>
            <person name="Howson R.W."/>
            <person name="Weissman J.S."/>
            <person name="O'Shea E.K."/>
        </authorList>
    </citation>
    <scope>SUBCELLULAR LOCATION [LARGE SCALE ANALYSIS]</scope>
</reference>
<reference key="8">
    <citation type="journal article" date="2003" name="Nature">
        <title>Global analysis of protein expression in yeast.</title>
        <authorList>
            <person name="Ghaemmaghami S."/>
            <person name="Huh W.-K."/>
            <person name="Bower K."/>
            <person name="Howson R.W."/>
            <person name="Belle A."/>
            <person name="Dephoure N."/>
            <person name="O'Shea E.K."/>
            <person name="Weissman J.S."/>
        </authorList>
    </citation>
    <scope>LEVEL OF PROTEIN EXPRESSION [LARGE SCALE ANALYSIS]</scope>
</reference>
<reference key="9">
    <citation type="journal article" date="2007" name="J. Proteome Res.">
        <title>Large-scale phosphorylation analysis of alpha-factor-arrested Saccharomyces cerevisiae.</title>
        <authorList>
            <person name="Li X."/>
            <person name="Gerber S.A."/>
            <person name="Rudner A.D."/>
            <person name="Beausoleil S.A."/>
            <person name="Haas W."/>
            <person name="Villen J."/>
            <person name="Elias J.E."/>
            <person name="Gygi S.P."/>
        </authorList>
    </citation>
    <scope>PHOSPHORYLATION [LARGE SCALE ANALYSIS] AT SER-135; SER-137 AND SER-142</scope>
    <scope>IDENTIFICATION BY MASS SPECTROMETRY [LARGE SCALE ANALYSIS]</scope>
    <source>
        <strain>ADR376</strain>
    </source>
</reference>
<reference key="10">
    <citation type="journal article" date="2008" name="Mol. Cell. Proteomics">
        <title>A multidimensional chromatography technology for in-depth phosphoproteome analysis.</title>
        <authorList>
            <person name="Albuquerque C.P."/>
            <person name="Smolka M.B."/>
            <person name="Payne S.H."/>
            <person name="Bafna V."/>
            <person name="Eng J."/>
            <person name="Zhou H."/>
        </authorList>
    </citation>
    <scope>PHOSPHORYLATION [LARGE SCALE ANALYSIS] AT SER-135</scope>
    <scope>IDENTIFICATION BY MASS SPECTROMETRY [LARGE SCALE ANALYSIS]</scope>
</reference>
<reference key="11">
    <citation type="journal article" date="2009" name="Science">
        <title>Global analysis of Cdk1 substrate phosphorylation sites provides insights into evolution.</title>
        <authorList>
            <person name="Holt L.J."/>
            <person name="Tuch B.B."/>
            <person name="Villen J."/>
            <person name="Johnson A.D."/>
            <person name="Gygi S.P."/>
            <person name="Morgan D.O."/>
        </authorList>
    </citation>
    <scope>PHOSPHORYLATION [LARGE SCALE ANALYSIS] AT SER-135; SER-137 AND SER-142</scope>
    <scope>IDENTIFICATION BY MASS SPECTROMETRY [LARGE SCALE ANALYSIS]</scope>
</reference>
<sequence length="146" mass="16650">MAGDSDNVSLPKATVQKMISEILDQDLMFTKDAREIIINSGIEFIMILSSMASEMADNEAKKTIAPEHVIKALEELEYNEFIPFLEEILLNFKGSQKVKETRDSKFKKSGLSEEELLRQQEELFRQSRSRLHHNSVSDPVKSEDSS</sequence>
<protein>
    <recommendedName>
        <fullName>Negative cofactor 2 complex subunit beta</fullName>
        <shortName>NC2 complex subunit beta</shortName>
    </recommendedName>
    <alternativeName>
        <fullName>Transcriptional repressor YDR1</fullName>
    </alternativeName>
</protein>
<keyword id="KW-0010">Activator</keyword>
<keyword id="KW-0539">Nucleus</keyword>
<keyword id="KW-0597">Phosphoprotein</keyword>
<keyword id="KW-1185">Reference proteome</keyword>
<keyword id="KW-0678">Repressor</keyword>
<keyword id="KW-0804">Transcription</keyword>
<keyword id="KW-0805">Transcription regulation</keyword>
<feature type="chain" id="PRO_0000255268" description="Negative cofactor 2 complex subunit beta">
    <location>
        <begin position="1"/>
        <end position="146"/>
    </location>
</feature>
<feature type="region of interest" description="Disordered" evidence="1">
    <location>
        <begin position="124"/>
        <end position="146"/>
    </location>
</feature>
<feature type="modified residue" description="Phosphoserine" evidence="9 10 11">
    <location>
        <position position="135"/>
    </location>
</feature>
<feature type="modified residue" description="Phosphoserine" evidence="9 11">
    <location>
        <position position="137"/>
    </location>
</feature>
<feature type="modified residue" description="Phosphoserine" evidence="9 11">
    <location>
        <position position="142"/>
    </location>
</feature>
<organism>
    <name type="scientific">Saccharomyces cerevisiae (strain ATCC 204508 / S288c)</name>
    <name type="common">Baker's yeast</name>
    <dbReference type="NCBI Taxonomy" id="559292"/>
    <lineage>
        <taxon>Eukaryota</taxon>
        <taxon>Fungi</taxon>
        <taxon>Dikarya</taxon>
        <taxon>Ascomycota</taxon>
        <taxon>Saccharomycotina</taxon>
        <taxon>Saccharomycetes</taxon>
        <taxon>Saccharomycetales</taxon>
        <taxon>Saccharomycetaceae</taxon>
        <taxon>Saccharomyces</taxon>
    </lineage>
</organism>
<proteinExistence type="evidence at protein level"/>
<comment type="function">
    <text evidence="2 5 6 7">Component of the NC2 complex which represses RNA polymerase II transcription through binding to SPT15/TBP and thereby inhibiting the assembly of the preinitiation complex. The NC2 complex may also mediate transcriptional activation from TATA-driven promoters through association with SPT15/TBP.</text>
</comment>
<comment type="subunit">
    <text evidence="5 6 7">Component of the NC2 (negative cofactor 2) complex composed of BUR6 and NCB2. The NC2 complex associates with SPT15/TBP. Interacts with SPT15/TBP.</text>
</comment>
<comment type="interaction">
    <interactant intactId="EBI-37723">
        <id>Q92317</id>
    </interactant>
    <interactant intactId="EBI-11908">
        <id>P40096</id>
        <label>BUR6</label>
    </interactant>
    <organismsDiffer>false</organismsDiffer>
    <experiments>6</experiments>
</comment>
<comment type="subcellular location">
    <subcellularLocation>
        <location evidence="3">Nucleus</location>
    </subcellularLocation>
</comment>
<comment type="miscellaneous">
    <text evidence="4">Present with 2950 molecules/cell in log phase SD medium.</text>
</comment>
<comment type="sequence caution" evidence="8">
    <conflict type="erroneous gene model prediction">
        <sequence resource="EMBL-CDS" id="AAB64838"/>
    </conflict>
</comment>